<name>YCEK_BACSU</name>
<protein>
    <recommendedName>
        <fullName>Uncharacterized HTH-type transcriptional regulator YceK</fullName>
    </recommendedName>
</protein>
<dbReference type="EMBL" id="AB000617">
    <property type="protein sequence ID" value="BAA22258.1"/>
    <property type="molecule type" value="Genomic_DNA"/>
</dbReference>
<dbReference type="EMBL" id="AL009126">
    <property type="protein sequence ID" value="CAB12091.1"/>
    <property type="molecule type" value="Genomic_DNA"/>
</dbReference>
<dbReference type="PIR" id="E69757">
    <property type="entry name" value="E69757"/>
</dbReference>
<dbReference type="RefSeq" id="NP_388179.1">
    <property type="nucleotide sequence ID" value="NC_000964.3"/>
</dbReference>
<dbReference type="RefSeq" id="WP_010886398.1">
    <property type="nucleotide sequence ID" value="NZ_OZ025638.1"/>
</dbReference>
<dbReference type="SMR" id="O34464"/>
<dbReference type="FunCoup" id="O34464">
    <property type="interactions" value="99"/>
</dbReference>
<dbReference type="STRING" id="224308.BSU02970"/>
<dbReference type="PaxDb" id="224308-BSU02970"/>
<dbReference type="EnsemblBacteria" id="CAB12091">
    <property type="protein sequence ID" value="CAB12091"/>
    <property type="gene ID" value="BSU_02970"/>
</dbReference>
<dbReference type="GeneID" id="938357"/>
<dbReference type="KEGG" id="bsu:BSU02970"/>
<dbReference type="PATRIC" id="fig|224308.43.peg.305"/>
<dbReference type="eggNOG" id="COG0640">
    <property type="taxonomic scope" value="Bacteria"/>
</dbReference>
<dbReference type="InParanoid" id="O34464"/>
<dbReference type="OrthoDB" id="9794330at2"/>
<dbReference type="PhylomeDB" id="O34464"/>
<dbReference type="BioCyc" id="BSUB:BSU02970-MONOMER"/>
<dbReference type="Proteomes" id="UP000001570">
    <property type="component" value="Chromosome"/>
</dbReference>
<dbReference type="GO" id="GO:0003677">
    <property type="term" value="F:DNA binding"/>
    <property type="evidence" value="ECO:0007669"/>
    <property type="project" value="UniProtKB-KW"/>
</dbReference>
<dbReference type="GO" id="GO:0003700">
    <property type="term" value="F:DNA-binding transcription factor activity"/>
    <property type="evidence" value="ECO:0007669"/>
    <property type="project" value="InterPro"/>
</dbReference>
<dbReference type="GO" id="GO:0006355">
    <property type="term" value="P:regulation of DNA-templated transcription"/>
    <property type="evidence" value="ECO:0000318"/>
    <property type="project" value="GO_Central"/>
</dbReference>
<dbReference type="CDD" id="cd00090">
    <property type="entry name" value="HTH_ARSR"/>
    <property type="match status" value="1"/>
</dbReference>
<dbReference type="Gene3D" id="1.10.10.10">
    <property type="entry name" value="Winged helix-like DNA-binding domain superfamily/Winged helix DNA-binding domain"/>
    <property type="match status" value="1"/>
</dbReference>
<dbReference type="InterPro" id="IPR011991">
    <property type="entry name" value="ArsR-like_HTH"/>
</dbReference>
<dbReference type="InterPro" id="IPR001845">
    <property type="entry name" value="HTH_ArsR_DNA-bd_dom"/>
</dbReference>
<dbReference type="InterPro" id="IPR051081">
    <property type="entry name" value="HTH_MetalResp_TranReg"/>
</dbReference>
<dbReference type="InterPro" id="IPR036388">
    <property type="entry name" value="WH-like_DNA-bd_sf"/>
</dbReference>
<dbReference type="InterPro" id="IPR036390">
    <property type="entry name" value="WH_DNA-bd_sf"/>
</dbReference>
<dbReference type="NCBIfam" id="NF033788">
    <property type="entry name" value="HTH_metalloreg"/>
    <property type="match status" value="1"/>
</dbReference>
<dbReference type="PANTHER" id="PTHR33154:SF25">
    <property type="entry name" value="LMO0101 PROTEIN"/>
    <property type="match status" value="1"/>
</dbReference>
<dbReference type="PANTHER" id="PTHR33154">
    <property type="entry name" value="TRANSCRIPTIONAL REGULATOR, ARSR FAMILY"/>
    <property type="match status" value="1"/>
</dbReference>
<dbReference type="Pfam" id="PF12840">
    <property type="entry name" value="HTH_20"/>
    <property type="match status" value="1"/>
</dbReference>
<dbReference type="PRINTS" id="PR00778">
    <property type="entry name" value="HTHARSR"/>
</dbReference>
<dbReference type="SMART" id="SM00418">
    <property type="entry name" value="HTH_ARSR"/>
    <property type="match status" value="1"/>
</dbReference>
<dbReference type="SUPFAM" id="SSF46785">
    <property type="entry name" value="Winged helix' DNA-binding domain"/>
    <property type="match status" value="1"/>
</dbReference>
<dbReference type="PROSITE" id="PS50987">
    <property type="entry name" value="HTH_ARSR_2"/>
    <property type="match status" value="1"/>
</dbReference>
<reference key="1">
    <citation type="journal article" date="1997" name="Microbiology">
        <title>A 32 kb nucleotide sequence from the region of the lincomycin-resistance gene (22 degrees-25 degrees) of the Bacillus subtilis chromosome and identification of the site of the lin-2 mutation.</title>
        <authorList>
            <person name="Kumano M."/>
            <person name="Tamakoshi A."/>
            <person name="Yamane K."/>
        </authorList>
    </citation>
    <scope>NUCLEOTIDE SEQUENCE [GENOMIC DNA]</scope>
    <source>
        <strain>168</strain>
    </source>
</reference>
<reference key="2">
    <citation type="journal article" date="1997" name="Nature">
        <title>The complete genome sequence of the Gram-positive bacterium Bacillus subtilis.</title>
        <authorList>
            <person name="Kunst F."/>
            <person name="Ogasawara N."/>
            <person name="Moszer I."/>
            <person name="Albertini A.M."/>
            <person name="Alloni G."/>
            <person name="Azevedo V."/>
            <person name="Bertero M.G."/>
            <person name="Bessieres P."/>
            <person name="Bolotin A."/>
            <person name="Borchert S."/>
            <person name="Borriss R."/>
            <person name="Boursier L."/>
            <person name="Brans A."/>
            <person name="Braun M."/>
            <person name="Brignell S.C."/>
            <person name="Bron S."/>
            <person name="Brouillet S."/>
            <person name="Bruschi C.V."/>
            <person name="Caldwell B."/>
            <person name="Capuano V."/>
            <person name="Carter N.M."/>
            <person name="Choi S.-K."/>
            <person name="Codani J.-J."/>
            <person name="Connerton I.F."/>
            <person name="Cummings N.J."/>
            <person name="Daniel R.A."/>
            <person name="Denizot F."/>
            <person name="Devine K.M."/>
            <person name="Duesterhoeft A."/>
            <person name="Ehrlich S.D."/>
            <person name="Emmerson P.T."/>
            <person name="Entian K.-D."/>
            <person name="Errington J."/>
            <person name="Fabret C."/>
            <person name="Ferrari E."/>
            <person name="Foulger D."/>
            <person name="Fritz C."/>
            <person name="Fujita M."/>
            <person name="Fujita Y."/>
            <person name="Fuma S."/>
            <person name="Galizzi A."/>
            <person name="Galleron N."/>
            <person name="Ghim S.-Y."/>
            <person name="Glaser P."/>
            <person name="Goffeau A."/>
            <person name="Golightly E.J."/>
            <person name="Grandi G."/>
            <person name="Guiseppi G."/>
            <person name="Guy B.J."/>
            <person name="Haga K."/>
            <person name="Haiech J."/>
            <person name="Harwood C.R."/>
            <person name="Henaut A."/>
            <person name="Hilbert H."/>
            <person name="Holsappel S."/>
            <person name="Hosono S."/>
            <person name="Hullo M.-F."/>
            <person name="Itaya M."/>
            <person name="Jones L.-M."/>
            <person name="Joris B."/>
            <person name="Karamata D."/>
            <person name="Kasahara Y."/>
            <person name="Klaerr-Blanchard M."/>
            <person name="Klein C."/>
            <person name="Kobayashi Y."/>
            <person name="Koetter P."/>
            <person name="Koningstein G."/>
            <person name="Krogh S."/>
            <person name="Kumano M."/>
            <person name="Kurita K."/>
            <person name="Lapidus A."/>
            <person name="Lardinois S."/>
            <person name="Lauber J."/>
            <person name="Lazarevic V."/>
            <person name="Lee S.-M."/>
            <person name="Levine A."/>
            <person name="Liu H."/>
            <person name="Masuda S."/>
            <person name="Mauel C."/>
            <person name="Medigue C."/>
            <person name="Medina N."/>
            <person name="Mellado R.P."/>
            <person name="Mizuno M."/>
            <person name="Moestl D."/>
            <person name="Nakai S."/>
            <person name="Noback M."/>
            <person name="Noone D."/>
            <person name="O'Reilly M."/>
            <person name="Ogawa K."/>
            <person name="Ogiwara A."/>
            <person name="Oudega B."/>
            <person name="Park S.-H."/>
            <person name="Parro V."/>
            <person name="Pohl T.M."/>
            <person name="Portetelle D."/>
            <person name="Porwollik S."/>
            <person name="Prescott A.M."/>
            <person name="Presecan E."/>
            <person name="Pujic P."/>
            <person name="Purnelle B."/>
            <person name="Rapoport G."/>
            <person name="Rey M."/>
            <person name="Reynolds S."/>
            <person name="Rieger M."/>
            <person name="Rivolta C."/>
            <person name="Rocha E."/>
            <person name="Roche B."/>
            <person name="Rose M."/>
            <person name="Sadaie Y."/>
            <person name="Sato T."/>
            <person name="Scanlan E."/>
            <person name="Schleich S."/>
            <person name="Schroeter R."/>
            <person name="Scoffone F."/>
            <person name="Sekiguchi J."/>
            <person name="Sekowska A."/>
            <person name="Seror S.J."/>
            <person name="Serror P."/>
            <person name="Shin B.-S."/>
            <person name="Soldo B."/>
            <person name="Sorokin A."/>
            <person name="Tacconi E."/>
            <person name="Takagi T."/>
            <person name="Takahashi H."/>
            <person name="Takemaru K."/>
            <person name="Takeuchi M."/>
            <person name="Tamakoshi A."/>
            <person name="Tanaka T."/>
            <person name="Terpstra P."/>
            <person name="Tognoni A."/>
            <person name="Tosato V."/>
            <person name="Uchiyama S."/>
            <person name="Vandenbol M."/>
            <person name="Vannier F."/>
            <person name="Vassarotti A."/>
            <person name="Viari A."/>
            <person name="Wambutt R."/>
            <person name="Wedler E."/>
            <person name="Wedler H."/>
            <person name="Weitzenegger T."/>
            <person name="Winters P."/>
            <person name="Wipat A."/>
            <person name="Yamamoto H."/>
            <person name="Yamane K."/>
            <person name="Yasumoto K."/>
            <person name="Yata K."/>
            <person name="Yoshida K."/>
            <person name="Yoshikawa H.-F."/>
            <person name="Zumstein E."/>
            <person name="Yoshikawa H."/>
            <person name="Danchin A."/>
        </authorList>
    </citation>
    <scope>NUCLEOTIDE SEQUENCE [LARGE SCALE GENOMIC DNA]</scope>
    <source>
        <strain>168</strain>
    </source>
</reference>
<gene>
    <name type="primary">yceK</name>
    <name type="ordered locus">BSU02970</name>
</gene>
<feature type="chain" id="PRO_0000359973" description="Uncharacterized HTH-type transcriptional regulator YceK">
    <location>
        <begin position="1"/>
        <end position="100"/>
    </location>
</feature>
<feature type="domain" description="HTH arsR-type" evidence="1">
    <location>
        <begin position="8"/>
        <end position="100"/>
    </location>
</feature>
<feature type="DNA-binding region" description="H-T-H motif" evidence="1">
    <location>
        <begin position="44"/>
        <end position="67"/>
    </location>
</feature>
<evidence type="ECO:0000255" key="1">
    <source>
        <dbReference type="PROSITE-ProRule" id="PRU00340"/>
    </source>
</evidence>
<keyword id="KW-0238">DNA-binding</keyword>
<keyword id="KW-1185">Reference proteome</keyword>
<keyword id="KW-0678">Repressor</keyword>
<keyword id="KW-0804">Transcription</keyword>
<keyword id="KW-0805">Transcription regulation</keyword>
<organism>
    <name type="scientific">Bacillus subtilis (strain 168)</name>
    <dbReference type="NCBI Taxonomy" id="224308"/>
    <lineage>
        <taxon>Bacteria</taxon>
        <taxon>Bacillati</taxon>
        <taxon>Bacillota</taxon>
        <taxon>Bacilli</taxon>
        <taxon>Bacillales</taxon>
        <taxon>Bacillaceae</taxon>
        <taxon>Bacillus</taxon>
    </lineage>
</organism>
<sequence>MYYSFMTMKQSDDQIRAQIFKALSDESRLAIIRTLYVSGKELSCGEVGEKCNIVKTTASYHFKTLREAGLTATRKDSRTKYVSLREDTFQTYLPGFLETL</sequence>
<proteinExistence type="predicted"/>
<accession>O34464</accession>
<accession>Q797R1</accession>